<protein>
    <recommendedName>
        <fullName evidence="1">Protein translocase subunit SecA</fullName>
        <ecNumber evidence="1">7.4.2.8</ecNumber>
    </recommendedName>
</protein>
<reference key="1">
    <citation type="journal article" date="2005" name="J. Bacteriol.">
        <title>Whole-genome sequence analysis of Pseudomonas syringae pv. phaseolicola 1448A reveals divergence among pathovars in genes involved in virulence and transposition.</title>
        <authorList>
            <person name="Joardar V."/>
            <person name="Lindeberg M."/>
            <person name="Jackson R.W."/>
            <person name="Selengut J."/>
            <person name="Dodson R."/>
            <person name="Brinkac L.M."/>
            <person name="Daugherty S.C."/>
            <person name="DeBoy R.T."/>
            <person name="Durkin A.S."/>
            <person name="Gwinn Giglio M."/>
            <person name="Madupu R."/>
            <person name="Nelson W.C."/>
            <person name="Rosovitz M.J."/>
            <person name="Sullivan S.A."/>
            <person name="Crabtree J."/>
            <person name="Creasy T."/>
            <person name="Davidsen T.M."/>
            <person name="Haft D.H."/>
            <person name="Zafar N."/>
            <person name="Zhou L."/>
            <person name="Halpin R."/>
            <person name="Holley T."/>
            <person name="Khouri H.M."/>
            <person name="Feldblyum T.V."/>
            <person name="White O."/>
            <person name="Fraser C.M."/>
            <person name="Chatterjee A.K."/>
            <person name="Cartinhour S."/>
            <person name="Schneider D."/>
            <person name="Mansfield J.W."/>
            <person name="Collmer A."/>
            <person name="Buell R."/>
        </authorList>
    </citation>
    <scope>NUCLEOTIDE SEQUENCE [LARGE SCALE GENOMIC DNA]</scope>
    <source>
        <strain>1448A / Race 6</strain>
    </source>
</reference>
<sequence>MFAPLLKKLFGSKNEREVKRMLKTVQIVNAFEEQMVALSDEQLRAKTEEFKARIAKGETLDQLLPEAFAVAREAGKRVMGMRHFDVQLIGGMTLHEGQIAEMRTGEGKTLVGTLAVYLNALSGKGVHVVTVNDYLARRDANWMRPLYEFLGLTVGIVTPFQPPEEKRAAYAADITYGTNNEYGFDYLRDNMAFSMDDKFQRELNFAVIDEVDSILIDEARTPLIISGQAEDSSKLYTEINRLIPKLEQHIEEVEGEVTKPGHFTVDEKTRQVELNEAGHQFIEEMLTEVGLLAEGESLYSAHNLGLLTHVYAGLRAHKLFNRNVEYIVADGQVLLVDEHTGRTMPGRRLSEGLHQAIEAKENLNIQAESQTLASTTFQNYFRLYNKLSGMTGTADTEAFEFHQIYNLAVMVIPPNKPLARKDFNDLVYLTAEEKYAAIVTDIKACIAENRPVLVGTATIETSEHMSNLLKQEGIDHKVLNAKFHEKEAEIIAQAGRPGALTIATNMAGRGTDILLGGNWEVEVANLEDPTPEQIAQIKADWQKRHQQVIEAGGLHVIASERHESRRIDNQLRGRAGRQGDTGSSRFYLSLEDSLMRIFASDRVKNFMKALGMQSGEAIEHRMVTNAIEKAQRKVEGRNFDIRKQLLEFDDVANEQRKVIYHMRNTLLAAENIGETIADFREEVLNNLISQHIPPQSLPEQWNVAGLEAALNTDFAVKLPVQQWLDEDDNLHEDSLREKIMAQLLVAYNEKEDQASAEALRSFEKQILLRVLDDLWKDHLSTMDHLRHGIHLRGYAQKNPKQEYKRESFTLFQELLDSIKRDTIRVLSHVQVRREDPEEEEARLRQEAEELASRMQFEHAPAPGIDQPLLDEEGGEAPVAVASEPVRNDQKLGRNELCWCGSGKKFKHCHGQIN</sequence>
<accession>Q48EG6</accession>
<feature type="chain" id="PRO_0000320903" description="Protein translocase subunit SecA">
    <location>
        <begin position="1"/>
        <end position="913"/>
    </location>
</feature>
<feature type="binding site" evidence="1">
    <location>
        <position position="87"/>
    </location>
    <ligand>
        <name>ATP</name>
        <dbReference type="ChEBI" id="CHEBI:30616"/>
    </ligand>
</feature>
<feature type="binding site" evidence="1">
    <location>
        <begin position="105"/>
        <end position="109"/>
    </location>
    <ligand>
        <name>ATP</name>
        <dbReference type="ChEBI" id="CHEBI:30616"/>
    </ligand>
</feature>
<feature type="binding site" evidence="1">
    <location>
        <position position="512"/>
    </location>
    <ligand>
        <name>ATP</name>
        <dbReference type="ChEBI" id="CHEBI:30616"/>
    </ligand>
</feature>
<feature type="binding site" evidence="1">
    <location>
        <position position="897"/>
    </location>
    <ligand>
        <name>Zn(2+)</name>
        <dbReference type="ChEBI" id="CHEBI:29105"/>
    </ligand>
</feature>
<feature type="binding site" evidence="1">
    <location>
        <position position="899"/>
    </location>
    <ligand>
        <name>Zn(2+)</name>
        <dbReference type="ChEBI" id="CHEBI:29105"/>
    </ligand>
</feature>
<feature type="binding site" evidence="1">
    <location>
        <position position="908"/>
    </location>
    <ligand>
        <name>Zn(2+)</name>
        <dbReference type="ChEBI" id="CHEBI:29105"/>
    </ligand>
</feature>
<feature type="binding site" evidence="1">
    <location>
        <position position="909"/>
    </location>
    <ligand>
        <name>Zn(2+)</name>
        <dbReference type="ChEBI" id="CHEBI:29105"/>
    </ligand>
</feature>
<evidence type="ECO:0000255" key="1">
    <source>
        <dbReference type="HAMAP-Rule" id="MF_01382"/>
    </source>
</evidence>
<name>SECA_PSE14</name>
<organism>
    <name type="scientific">Pseudomonas savastanoi pv. phaseolicola (strain 1448A / Race 6)</name>
    <name type="common">Pseudomonas syringae pv. phaseolicola (strain 1448A / Race 6)</name>
    <dbReference type="NCBI Taxonomy" id="264730"/>
    <lineage>
        <taxon>Bacteria</taxon>
        <taxon>Pseudomonadati</taxon>
        <taxon>Pseudomonadota</taxon>
        <taxon>Gammaproteobacteria</taxon>
        <taxon>Pseudomonadales</taxon>
        <taxon>Pseudomonadaceae</taxon>
        <taxon>Pseudomonas</taxon>
    </lineage>
</organism>
<proteinExistence type="inferred from homology"/>
<comment type="function">
    <text evidence="1">Part of the Sec protein translocase complex. Interacts with the SecYEG preprotein conducting channel. Has a central role in coupling the hydrolysis of ATP to the transfer of proteins into and across the cell membrane, serving both as a receptor for the preprotein-SecB complex and as an ATP-driven molecular motor driving the stepwise translocation of polypeptide chains across the membrane.</text>
</comment>
<comment type="catalytic activity">
    <reaction evidence="1">
        <text>ATP + H2O + cellular proteinSide 1 = ADP + phosphate + cellular proteinSide 2.</text>
        <dbReference type="EC" id="7.4.2.8"/>
    </reaction>
</comment>
<comment type="cofactor">
    <cofactor evidence="1">
        <name>Zn(2+)</name>
        <dbReference type="ChEBI" id="CHEBI:29105"/>
    </cofactor>
    <text evidence="1">May bind 1 zinc ion per subunit.</text>
</comment>
<comment type="subunit">
    <text evidence="1">Monomer and homodimer. Part of the essential Sec protein translocation apparatus which comprises SecA, SecYEG and auxiliary proteins SecDF-YajC and YidC.</text>
</comment>
<comment type="subcellular location">
    <subcellularLocation>
        <location evidence="1">Cell inner membrane</location>
        <topology evidence="1">Peripheral membrane protein</topology>
        <orientation evidence="1">Cytoplasmic side</orientation>
    </subcellularLocation>
    <subcellularLocation>
        <location evidence="1">Cytoplasm</location>
    </subcellularLocation>
    <text evidence="1">Distribution is 50-50.</text>
</comment>
<comment type="similarity">
    <text evidence="1">Belongs to the SecA family.</text>
</comment>
<dbReference type="EC" id="7.4.2.8" evidence="1"/>
<dbReference type="EMBL" id="CP000058">
    <property type="protein sequence ID" value="AAZ34088.1"/>
    <property type="molecule type" value="Genomic_DNA"/>
</dbReference>
<dbReference type="RefSeq" id="WP_004666178.1">
    <property type="nucleotide sequence ID" value="NC_005773.3"/>
</dbReference>
<dbReference type="SMR" id="Q48EG6"/>
<dbReference type="KEGG" id="psp:PSPPH_4100"/>
<dbReference type="eggNOG" id="COG0653">
    <property type="taxonomic scope" value="Bacteria"/>
</dbReference>
<dbReference type="HOGENOM" id="CLU_005314_3_0_6"/>
<dbReference type="Proteomes" id="UP000000551">
    <property type="component" value="Chromosome"/>
</dbReference>
<dbReference type="GO" id="GO:0031522">
    <property type="term" value="C:cell envelope Sec protein transport complex"/>
    <property type="evidence" value="ECO:0007669"/>
    <property type="project" value="TreeGrafter"/>
</dbReference>
<dbReference type="GO" id="GO:0005829">
    <property type="term" value="C:cytosol"/>
    <property type="evidence" value="ECO:0007669"/>
    <property type="project" value="TreeGrafter"/>
</dbReference>
<dbReference type="GO" id="GO:0005886">
    <property type="term" value="C:plasma membrane"/>
    <property type="evidence" value="ECO:0007669"/>
    <property type="project" value="UniProtKB-SubCell"/>
</dbReference>
<dbReference type="GO" id="GO:0005524">
    <property type="term" value="F:ATP binding"/>
    <property type="evidence" value="ECO:0007669"/>
    <property type="project" value="UniProtKB-UniRule"/>
</dbReference>
<dbReference type="GO" id="GO:0046872">
    <property type="term" value="F:metal ion binding"/>
    <property type="evidence" value="ECO:0007669"/>
    <property type="project" value="UniProtKB-KW"/>
</dbReference>
<dbReference type="GO" id="GO:0008564">
    <property type="term" value="F:protein-exporting ATPase activity"/>
    <property type="evidence" value="ECO:0007669"/>
    <property type="project" value="UniProtKB-EC"/>
</dbReference>
<dbReference type="GO" id="GO:0065002">
    <property type="term" value="P:intracellular protein transmembrane transport"/>
    <property type="evidence" value="ECO:0007669"/>
    <property type="project" value="UniProtKB-UniRule"/>
</dbReference>
<dbReference type="GO" id="GO:0017038">
    <property type="term" value="P:protein import"/>
    <property type="evidence" value="ECO:0007669"/>
    <property type="project" value="InterPro"/>
</dbReference>
<dbReference type="GO" id="GO:0006605">
    <property type="term" value="P:protein targeting"/>
    <property type="evidence" value="ECO:0007669"/>
    <property type="project" value="UniProtKB-UniRule"/>
</dbReference>
<dbReference type="GO" id="GO:0043952">
    <property type="term" value="P:protein transport by the Sec complex"/>
    <property type="evidence" value="ECO:0007669"/>
    <property type="project" value="TreeGrafter"/>
</dbReference>
<dbReference type="CDD" id="cd17928">
    <property type="entry name" value="DEXDc_SecA"/>
    <property type="match status" value="1"/>
</dbReference>
<dbReference type="CDD" id="cd18803">
    <property type="entry name" value="SF2_C_secA"/>
    <property type="match status" value="1"/>
</dbReference>
<dbReference type="FunFam" id="3.40.50.300:FF:000081">
    <property type="entry name" value="Preprotein translocase subunit SecA"/>
    <property type="match status" value="1"/>
</dbReference>
<dbReference type="FunFam" id="3.40.50.300:FF:000113">
    <property type="entry name" value="Preprotein translocase subunit SecA"/>
    <property type="match status" value="1"/>
</dbReference>
<dbReference type="FunFam" id="3.90.1440.10:FF:000001">
    <property type="entry name" value="Preprotein translocase subunit SecA"/>
    <property type="match status" value="1"/>
</dbReference>
<dbReference type="FunFam" id="1.10.3060.10:FF:000003">
    <property type="entry name" value="Protein translocase subunit SecA"/>
    <property type="match status" value="1"/>
</dbReference>
<dbReference type="Gene3D" id="1.10.3060.10">
    <property type="entry name" value="Helical scaffold and wing domains of SecA"/>
    <property type="match status" value="1"/>
</dbReference>
<dbReference type="Gene3D" id="3.40.50.300">
    <property type="entry name" value="P-loop containing nucleotide triphosphate hydrolases"/>
    <property type="match status" value="2"/>
</dbReference>
<dbReference type="Gene3D" id="3.90.1440.10">
    <property type="entry name" value="SecA, preprotein cross-linking domain"/>
    <property type="match status" value="1"/>
</dbReference>
<dbReference type="HAMAP" id="MF_01382">
    <property type="entry name" value="SecA"/>
    <property type="match status" value="1"/>
</dbReference>
<dbReference type="InterPro" id="IPR014001">
    <property type="entry name" value="Helicase_ATP-bd"/>
</dbReference>
<dbReference type="InterPro" id="IPR001650">
    <property type="entry name" value="Helicase_C-like"/>
</dbReference>
<dbReference type="InterPro" id="IPR027417">
    <property type="entry name" value="P-loop_NTPase"/>
</dbReference>
<dbReference type="InterPro" id="IPR004027">
    <property type="entry name" value="SEC_C_motif"/>
</dbReference>
<dbReference type="InterPro" id="IPR000185">
    <property type="entry name" value="SecA"/>
</dbReference>
<dbReference type="InterPro" id="IPR011115">
    <property type="entry name" value="SecA_DEAD"/>
</dbReference>
<dbReference type="InterPro" id="IPR014018">
    <property type="entry name" value="SecA_motor_DEAD"/>
</dbReference>
<dbReference type="InterPro" id="IPR011130">
    <property type="entry name" value="SecA_preprotein_X-link_dom"/>
</dbReference>
<dbReference type="InterPro" id="IPR044722">
    <property type="entry name" value="SecA_SF2_C"/>
</dbReference>
<dbReference type="InterPro" id="IPR011116">
    <property type="entry name" value="SecA_Wing/Scaffold"/>
</dbReference>
<dbReference type="InterPro" id="IPR036266">
    <property type="entry name" value="SecA_Wing/Scaffold_sf"/>
</dbReference>
<dbReference type="InterPro" id="IPR036670">
    <property type="entry name" value="SecA_X-link_sf"/>
</dbReference>
<dbReference type="NCBIfam" id="NF009538">
    <property type="entry name" value="PRK12904.1"/>
    <property type="match status" value="1"/>
</dbReference>
<dbReference type="NCBIfam" id="TIGR00963">
    <property type="entry name" value="secA"/>
    <property type="match status" value="1"/>
</dbReference>
<dbReference type="PANTHER" id="PTHR30612:SF0">
    <property type="entry name" value="CHLOROPLAST PROTEIN-TRANSPORTING ATPASE"/>
    <property type="match status" value="1"/>
</dbReference>
<dbReference type="PANTHER" id="PTHR30612">
    <property type="entry name" value="SECA INNER MEMBRANE COMPONENT OF SEC PROTEIN SECRETION SYSTEM"/>
    <property type="match status" value="1"/>
</dbReference>
<dbReference type="Pfam" id="PF21090">
    <property type="entry name" value="P-loop_SecA"/>
    <property type="match status" value="1"/>
</dbReference>
<dbReference type="Pfam" id="PF02810">
    <property type="entry name" value="SEC-C"/>
    <property type="match status" value="1"/>
</dbReference>
<dbReference type="Pfam" id="PF07517">
    <property type="entry name" value="SecA_DEAD"/>
    <property type="match status" value="1"/>
</dbReference>
<dbReference type="Pfam" id="PF01043">
    <property type="entry name" value="SecA_PP_bind"/>
    <property type="match status" value="1"/>
</dbReference>
<dbReference type="Pfam" id="PF07516">
    <property type="entry name" value="SecA_SW"/>
    <property type="match status" value="1"/>
</dbReference>
<dbReference type="PRINTS" id="PR00906">
    <property type="entry name" value="SECA"/>
</dbReference>
<dbReference type="SMART" id="SM00957">
    <property type="entry name" value="SecA_DEAD"/>
    <property type="match status" value="1"/>
</dbReference>
<dbReference type="SMART" id="SM00958">
    <property type="entry name" value="SecA_PP_bind"/>
    <property type="match status" value="1"/>
</dbReference>
<dbReference type="SUPFAM" id="SSF81886">
    <property type="entry name" value="Helical scaffold and wing domains of SecA"/>
    <property type="match status" value="1"/>
</dbReference>
<dbReference type="SUPFAM" id="SSF52540">
    <property type="entry name" value="P-loop containing nucleoside triphosphate hydrolases"/>
    <property type="match status" value="2"/>
</dbReference>
<dbReference type="SUPFAM" id="SSF81767">
    <property type="entry name" value="Pre-protein crosslinking domain of SecA"/>
    <property type="match status" value="1"/>
</dbReference>
<dbReference type="PROSITE" id="PS51196">
    <property type="entry name" value="SECA_MOTOR_DEAD"/>
    <property type="match status" value="1"/>
</dbReference>
<gene>
    <name evidence="1" type="primary">secA</name>
    <name type="ordered locus">PSPPH_4100</name>
</gene>
<keyword id="KW-0067">ATP-binding</keyword>
<keyword id="KW-0997">Cell inner membrane</keyword>
<keyword id="KW-1003">Cell membrane</keyword>
<keyword id="KW-0963">Cytoplasm</keyword>
<keyword id="KW-0472">Membrane</keyword>
<keyword id="KW-0479">Metal-binding</keyword>
<keyword id="KW-0547">Nucleotide-binding</keyword>
<keyword id="KW-0653">Protein transport</keyword>
<keyword id="KW-1278">Translocase</keyword>
<keyword id="KW-0811">Translocation</keyword>
<keyword id="KW-0813">Transport</keyword>
<keyword id="KW-0862">Zinc</keyword>